<reference key="1">
    <citation type="submission" date="2006-04" db="EMBL/GenBank/DDBJ databases">
        <authorList>
            <person name="Conrad M.L."/>
            <person name="Mawer M.A."/>
            <person name="Davis S.K."/>
            <person name="Koop B.F."/>
        </authorList>
    </citation>
    <scope>NUCLEOTIDE SEQUENCE [GENOMIC DNA]</scope>
</reference>
<reference key="2">
    <citation type="submission" date="2005-08" db="EMBL/GenBank/DDBJ databases">
        <authorList>
            <consortium name="NIH - Mammalian Gene Collection (MGC) project"/>
        </authorList>
    </citation>
    <scope>NUCLEOTIDE SEQUENCE [LARGE SCALE MRNA]</scope>
    <source>
        <strain>Crossbred X Angus</strain>
        <tissue>Ileum</tissue>
    </source>
</reference>
<evidence type="ECO:0000250" key="1">
    <source>
        <dbReference type="UniProtKB" id="O95777"/>
    </source>
</evidence>
<evidence type="ECO:0000255" key="2">
    <source>
        <dbReference type="PROSITE-ProRule" id="PRU01346"/>
    </source>
</evidence>
<evidence type="ECO:0000305" key="3"/>
<comment type="function">
    <text evidence="1">Plays a role in pre-mRNA splicing as component of the U4/U6-U5 tri-snRNP complex that is involved in spliceosome assembly, and as component of the precatalytic spliceosome (spliceosome B complex). The heptameric LSM2-8 complex binds specifically to the 3'-terminal U-tract of U6 snRNA.</text>
</comment>
<comment type="subunit">
    <text evidence="1">Component of the precatalytic spliceosome (spliceosome B complex). Component of the U4/U6-U5 tri-snRNP complex, a building block of the precatalytic spliceosome (spliceosome B complex). The U4/U6-U5 tri-snRNP complex is composed of the U4, U6 and U5 snRNAs and at least PRPF3, PRPF4, PRPF6, PRPF8, PRPF31, SNRNP200, TXNL4A, SNRNP40, SNRPB, SNRPD1, SNRPD2, SNRPD3, SNRPE, SNRPF, SNRPG, DDX23, CD2BP2, PPIH, SNU13, EFTUD2, SART1 and USP39, plus LSM2, LSM3, LSM4, LSM5, LSM6, LSM7 and LSM8. LSM2, LSM3, LSM4, LSM5, LSM6, LSM7 and LSM8 form a heptameric, ring-shaped subcomplex (the LSM2-8 complex) that is part of the U4/U6-U5 tri-snRNP complex and the precatalytic spliceosome.</text>
</comment>
<comment type="subcellular location">
    <subcellularLocation>
        <location evidence="1">Nucleus</location>
    </subcellularLocation>
</comment>
<comment type="similarity">
    <text evidence="3">Belongs to the snRNP Sm proteins family.</text>
</comment>
<comment type="sequence caution" evidence="3">
    <conflict type="erroneous initiation">
        <sequence resource="EMBL-CDS" id="ABE96774"/>
    </conflict>
</comment>
<gene>
    <name type="primary">LSM8</name>
</gene>
<keyword id="KW-0007">Acetylation</keyword>
<keyword id="KW-0507">mRNA processing</keyword>
<keyword id="KW-0508">mRNA splicing</keyword>
<keyword id="KW-0539">Nucleus</keyword>
<keyword id="KW-1185">Reference proteome</keyword>
<keyword id="KW-0687">Ribonucleoprotein</keyword>
<keyword id="KW-0694">RNA-binding</keyword>
<keyword id="KW-0747">Spliceosome</keyword>
<name>LSM8_BOVIN</name>
<accession>Q3ZCE0</accession>
<proteinExistence type="inferred from homology"/>
<dbReference type="EMBL" id="AY644517">
    <property type="protein sequence ID" value="ABE96774.2"/>
    <property type="status" value="ALT_INIT"/>
    <property type="molecule type" value="Genomic_DNA"/>
</dbReference>
<dbReference type="EMBL" id="BC102499">
    <property type="protein sequence ID" value="AAI02500.1"/>
    <property type="molecule type" value="mRNA"/>
</dbReference>
<dbReference type="RefSeq" id="NP_001029912.1">
    <property type="nucleotide sequence ID" value="NM_001034740.2"/>
</dbReference>
<dbReference type="SMR" id="Q3ZCE0"/>
<dbReference type="FunCoup" id="Q3ZCE0">
    <property type="interactions" value="3209"/>
</dbReference>
<dbReference type="STRING" id="9913.ENSBTAP00000016780"/>
<dbReference type="PaxDb" id="9913-ENSBTAP00000016780"/>
<dbReference type="GeneID" id="613630"/>
<dbReference type="KEGG" id="bta:613630"/>
<dbReference type="CTD" id="51691"/>
<dbReference type="VEuPathDB" id="HostDB:ENSBTAG00000012649"/>
<dbReference type="eggNOG" id="KOG1784">
    <property type="taxonomic scope" value="Eukaryota"/>
</dbReference>
<dbReference type="HOGENOM" id="CLU_076902_8_2_1"/>
<dbReference type="InParanoid" id="Q3ZCE0"/>
<dbReference type="OMA" id="AACDQTT"/>
<dbReference type="OrthoDB" id="10263346at2759"/>
<dbReference type="TreeFam" id="TF314555"/>
<dbReference type="Reactome" id="R-BTA-72163">
    <property type="pathway name" value="mRNA Splicing - Major Pathway"/>
</dbReference>
<dbReference type="Proteomes" id="UP000009136">
    <property type="component" value="Chromosome 4"/>
</dbReference>
<dbReference type="Bgee" id="ENSBTAG00000012649">
    <property type="expression patterns" value="Expressed in semen and 108 other cell types or tissues"/>
</dbReference>
<dbReference type="GO" id="GO:0120115">
    <property type="term" value="C:Lsm2-8 complex"/>
    <property type="evidence" value="ECO:0000250"/>
    <property type="project" value="UniProtKB"/>
</dbReference>
<dbReference type="GO" id="GO:0005634">
    <property type="term" value="C:nucleus"/>
    <property type="evidence" value="ECO:0000250"/>
    <property type="project" value="UniProtKB"/>
</dbReference>
<dbReference type="GO" id="GO:0071011">
    <property type="term" value="C:precatalytic spliceosome"/>
    <property type="evidence" value="ECO:0000318"/>
    <property type="project" value="GO_Central"/>
</dbReference>
<dbReference type="GO" id="GO:0071005">
    <property type="term" value="C:U2-type precatalytic spliceosome"/>
    <property type="evidence" value="ECO:0000250"/>
    <property type="project" value="UniProtKB"/>
</dbReference>
<dbReference type="GO" id="GO:0046540">
    <property type="term" value="C:U4/U6 x U5 tri-snRNP complex"/>
    <property type="evidence" value="ECO:0000250"/>
    <property type="project" value="UniProtKB"/>
</dbReference>
<dbReference type="GO" id="GO:0005688">
    <property type="term" value="C:U6 snRNP"/>
    <property type="evidence" value="ECO:0000318"/>
    <property type="project" value="GO_Central"/>
</dbReference>
<dbReference type="GO" id="GO:0003729">
    <property type="term" value="F:mRNA binding"/>
    <property type="evidence" value="ECO:0000318"/>
    <property type="project" value="GO_Central"/>
</dbReference>
<dbReference type="GO" id="GO:0000398">
    <property type="term" value="P:mRNA splicing, via spliceosome"/>
    <property type="evidence" value="ECO:0000250"/>
    <property type="project" value="UniProtKB"/>
</dbReference>
<dbReference type="CDD" id="cd01727">
    <property type="entry name" value="LSm8"/>
    <property type="match status" value="1"/>
</dbReference>
<dbReference type="FunFam" id="2.30.30.100:FF:000022">
    <property type="entry name" value="U6 snRNA-associated Sm-like protein LSm8"/>
    <property type="match status" value="1"/>
</dbReference>
<dbReference type="Gene3D" id="2.30.30.100">
    <property type="match status" value="1"/>
</dbReference>
<dbReference type="InterPro" id="IPR034103">
    <property type="entry name" value="Lsm8"/>
</dbReference>
<dbReference type="InterPro" id="IPR010920">
    <property type="entry name" value="LSM_dom_sf"/>
</dbReference>
<dbReference type="InterPro" id="IPR044642">
    <property type="entry name" value="PTHR15588"/>
</dbReference>
<dbReference type="InterPro" id="IPR047575">
    <property type="entry name" value="Sm"/>
</dbReference>
<dbReference type="InterPro" id="IPR001163">
    <property type="entry name" value="Sm_dom_euk/arc"/>
</dbReference>
<dbReference type="PANTHER" id="PTHR15588">
    <property type="entry name" value="LSM1"/>
    <property type="match status" value="1"/>
</dbReference>
<dbReference type="PANTHER" id="PTHR15588:SF9">
    <property type="entry name" value="U6 SNRNA-ASSOCIATED SM-LIKE PROTEIN LSM8"/>
    <property type="match status" value="1"/>
</dbReference>
<dbReference type="Pfam" id="PF01423">
    <property type="entry name" value="LSM"/>
    <property type="match status" value="1"/>
</dbReference>
<dbReference type="SMART" id="SM00651">
    <property type="entry name" value="Sm"/>
    <property type="match status" value="1"/>
</dbReference>
<dbReference type="SUPFAM" id="SSF50182">
    <property type="entry name" value="Sm-like ribonucleoproteins"/>
    <property type="match status" value="1"/>
</dbReference>
<dbReference type="PROSITE" id="PS52002">
    <property type="entry name" value="SM"/>
    <property type="match status" value="1"/>
</dbReference>
<sequence length="96" mass="10403">MTSALENYINRTVAVITSDGRMIVGTLKGFDQTINLILDESHERVFSSSQGVEQVVLGLYIVRGDNVAVIGEIDEETDSALDLGNIRAEPLNSVAH</sequence>
<protein>
    <recommendedName>
        <fullName>U6 snRNA-associated Sm-like protein LSm8</fullName>
    </recommendedName>
</protein>
<feature type="initiator methionine" description="Removed" evidence="1">
    <location>
        <position position="1"/>
    </location>
</feature>
<feature type="chain" id="PRO_0000238672" description="U6 snRNA-associated Sm-like protein LSm8">
    <location>
        <begin position="2"/>
        <end position="96"/>
    </location>
</feature>
<feature type="domain" description="Sm" evidence="2">
    <location>
        <begin position="1"/>
        <end position="76"/>
    </location>
</feature>
<feature type="modified residue" description="N-acetylthreonine" evidence="1">
    <location>
        <position position="2"/>
    </location>
</feature>
<organism>
    <name type="scientific">Bos taurus</name>
    <name type="common">Bovine</name>
    <dbReference type="NCBI Taxonomy" id="9913"/>
    <lineage>
        <taxon>Eukaryota</taxon>
        <taxon>Metazoa</taxon>
        <taxon>Chordata</taxon>
        <taxon>Craniata</taxon>
        <taxon>Vertebrata</taxon>
        <taxon>Euteleostomi</taxon>
        <taxon>Mammalia</taxon>
        <taxon>Eutheria</taxon>
        <taxon>Laurasiatheria</taxon>
        <taxon>Artiodactyla</taxon>
        <taxon>Ruminantia</taxon>
        <taxon>Pecora</taxon>
        <taxon>Bovidae</taxon>
        <taxon>Bovinae</taxon>
        <taxon>Bos</taxon>
    </lineage>
</organism>